<reference key="1">
    <citation type="submission" date="2007-10" db="EMBL/GenBank/DDBJ databases">
        <title>Complete sequence of chromosome of Desulforudis audaxviator MP104C.</title>
        <authorList>
            <person name="Copeland A."/>
            <person name="Lucas S."/>
            <person name="Lapidus A."/>
            <person name="Barry K."/>
            <person name="Glavina del Rio T."/>
            <person name="Dalin E."/>
            <person name="Tice H."/>
            <person name="Bruce D."/>
            <person name="Pitluck S."/>
            <person name="Lowry S.R."/>
            <person name="Larimer F."/>
            <person name="Land M.L."/>
            <person name="Hauser L."/>
            <person name="Kyrpides N."/>
            <person name="Ivanova N.N."/>
            <person name="Richardson P."/>
        </authorList>
    </citation>
    <scope>NUCLEOTIDE SEQUENCE [LARGE SCALE GENOMIC DNA]</scope>
    <source>
        <strain>MP104C</strain>
    </source>
</reference>
<sequence>MALRFILGRAGTGKTRLCLEEIRKELRQAPDGPPLVFLVPEQATFQTEYALALTPGLSGMFRAQVLSFRRLAWRVFSEVGGAARPHVGDVGKRMMLARILARRRNELRLFGRAAGQYGFSGTLAGVLSELKTYLVTPEALEQAVRMLPGTAETDSLQAKLEDLRLLYTDFERELAGKYIDPDDYLTLLAARLGESPTLRAAEVWVDGFAGFTPQEYAVLEALLKAAARVNVALCLDPRSGRREDLELFQVTRDTRARLAELARKNGVELERPVELAGPPARFRANPALAHLEREFFRRPTKKFAGPPENLRLVAAASRRAEVEGAAREILRLSRERGWRWRDVSLVVRNLADYHELVATVFADYGIPCFIDRKRPVRHHPLVELIRSALETVTENWTYDPVFRYLKTDLVPVSRGDVDLLENYVLAHGIKGAKWADPEDWHYRRSDALNRPVPNGTGAPAPSDRDRYLREKVNRIRRRAARHLLDFQRRVQAAGTVRELTAALYDLLSDLDVPGRIEEWSREAETEGRLEAAREHRQLWDGVVELLDQVVETLGDEALTPEEYGRILDSGMDGLQLALIPPALDQVLVGSLERSRNPDIRAAFVLGVSEGVLPGRHGGTGLFTDREREVLLAAGLEVAPDTRRKVYEEQYLVYIALTRAGHYLWVSYPLADEEGGALAPSSVIPRLRELFPGLREETLALEPEGTAPGADLPYVTAPGRTLGFLVTRLRDWKSGVTVDPVWWSVFNWFAAHAGWRERCAPVLAGLFYENREPRLDPELTPELYGSRLVVSVSRLEEFRGCPFAHFARYALRLKERDVCRLAAPDIGLFFHAALKTFEDRLREAGMEWDALESADCTRLASAVVEELAPQLQSEVLLSSPRLRFLTGKLERVVERTAGVMAAHARHSRFQPVAVEVAFGPGRDVPGPAYPLPGGGSVELAGRIDRVDVAHTDNAAYLRVIDYKAGPRSLALDDVYYGLNLQLLVYLEAGLREAAALAGRECRPAGAFYFRVQNPLLKGGTPVPPAEVAPRLLKAFRLQGLVLDDPALLRLMDDAIGSESAIVPAGLKQDGTVKKKPGVVSAAQLERLQEHVRRVVAETAAEIQAGVVAIAPYRKGQANACRYCAFKPVCAFDPLLESNRYRQLRALTAGELWRLLGLPEEDEPGDE</sequence>
<keyword id="KW-0004">4Fe-4S</keyword>
<keyword id="KW-0067">ATP-binding</keyword>
<keyword id="KW-0227">DNA damage</keyword>
<keyword id="KW-0234">DNA repair</keyword>
<keyword id="KW-0238">DNA-binding</keyword>
<keyword id="KW-0269">Exonuclease</keyword>
<keyword id="KW-0347">Helicase</keyword>
<keyword id="KW-0378">Hydrolase</keyword>
<keyword id="KW-0408">Iron</keyword>
<keyword id="KW-0411">Iron-sulfur</keyword>
<keyword id="KW-0479">Metal-binding</keyword>
<keyword id="KW-0540">Nuclease</keyword>
<keyword id="KW-0547">Nucleotide-binding</keyword>
<keyword id="KW-1185">Reference proteome</keyword>
<evidence type="ECO:0000255" key="1">
    <source>
        <dbReference type="HAMAP-Rule" id="MF_01452"/>
    </source>
</evidence>
<protein>
    <recommendedName>
        <fullName evidence="1">ATP-dependent helicase/deoxyribonuclease subunit B</fullName>
        <ecNumber evidence="1">3.1.-.-</ecNumber>
    </recommendedName>
    <alternativeName>
        <fullName evidence="1">ATP-dependent helicase/nuclease subunit AddB</fullName>
    </alternativeName>
</protein>
<feature type="chain" id="PRO_0000379188" description="ATP-dependent helicase/deoxyribonuclease subunit B">
    <location>
        <begin position="1"/>
        <end position="1165"/>
    </location>
</feature>
<feature type="domain" description="UvrD-like helicase ATP-binding" evidence="1">
    <location>
        <begin position="1"/>
        <end position="298"/>
    </location>
</feature>
<feature type="domain" description="UvrD-like helicase C-terminal" evidence="1">
    <location>
        <begin position="279"/>
        <end position="584"/>
    </location>
</feature>
<feature type="binding site" evidence="1">
    <location>
        <begin position="8"/>
        <end position="15"/>
    </location>
    <ligand>
        <name>ATP</name>
        <dbReference type="ChEBI" id="CHEBI:30616"/>
    </ligand>
</feature>
<feature type="binding site" evidence="1">
    <location>
        <position position="800"/>
    </location>
    <ligand>
        <name>[4Fe-4S] cluster</name>
        <dbReference type="ChEBI" id="CHEBI:49883"/>
    </ligand>
</feature>
<feature type="binding site" evidence="1">
    <location>
        <position position="1119"/>
    </location>
    <ligand>
        <name>[4Fe-4S] cluster</name>
        <dbReference type="ChEBI" id="CHEBI:49883"/>
    </ligand>
</feature>
<feature type="binding site" evidence="1">
    <location>
        <position position="1122"/>
    </location>
    <ligand>
        <name>[4Fe-4S] cluster</name>
        <dbReference type="ChEBI" id="CHEBI:49883"/>
    </ligand>
</feature>
<feature type="binding site" evidence="1">
    <location>
        <position position="1128"/>
    </location>
    <ligand>
        <name>[4Fe-4S] cluster</name>
        <dbReference type="ChEBI" id="CHEBI:49883"/>
    </ligand>
</feature>
<gene>
    <name evidence="1" type="primary">addB</name>
    <name type="ordered locus">Daud_1277</name>
</gene>
<dbReference type="EC" id="3.1.-.-" evidence="1"/>
<dbReference type="EMBL" id="CP000860">
    <property type="protein sequence ID" value="ACA59788.1"/>
    <property type="molecule type" value="Genomic_DNA"/>
</dbReference>
<dbReference type="RefSeq" id="WP_012302373.1">
    <property type="nucleotide sequence ID" value="NC_010424.1"/>
</dbReference>
<dbReference type="SMR" id="B1I494"/>
<dbReference type="STRING" id="477974.Daud_1277"/>
<dbReference type="KEGG" id="dau:Daud_1277"/>
<dbReference type="eggNOG" id="COG3857">
    <property type="taxonomic scope" value="Bacteria"/>
</dbReference>
<dbReference type="HOGENOM" id="CLU_007838_0_0_9"/>
<dbReference type="OrthoDB" id="9758506at2"/>
<dbReference type="Proteomes" id="UP000008544">
    <property type="component" value="Chromosome"/>
</dbReference>
<dbReference type="GO" id="GO:0051539">
    <property type="term" value="F:4 iron, 4 sulfur cluster binding"/>
    <property type="evidence" value="ECO:0007669"/>
    <property type="project" value="UniProtKB-KW"/>
</dbReference>
<dbReference type="GO" id="GO:0008409">
    <property type="term" value="F:5'-3' exonuclease activity"/>
    <property type="evidence" value="ECO:0007669"/>
    <property type="project" value="UniProtKB-UniRule"/>
</dbReference>
<dbReference type="GO" id="GO:0005524">
    <property type="term" value="F:ATP binding"/>
    <property type="evidence" value="ECO:0007669"/>
    <property type="project" value="UniProtKB-UniRule"/>
</dbReference>
<dbReference type="GO" id="GO:0003690">
    <property type="term" value="F:double-stranded DNA binding"/>
    <property type="evidence" value="ECO:0007669"/>
    <property type="project" value="UniProtKB-UniRule"/>
</dbReference>
<dbReference type="GO" id="GO:0004386">
    <property type="term" value="F:helicase activity"/>
    <property type="evidence" value="ECO:0007669"/>
    <property type="project" value="UniProtKB-KW"/>
</dbReference>
<dbReference type="GO" id="GO:0046872">
    <property type="term" value="F:metal ion binding"/>
    <property type="evidence" value="ECO:0007669"/>
    <property type="project" value="UniProtKB-KW"/>
</dbReference>
<dbReference type="GO" id="GO:0000724">
    <property type="term" value="P:double-strand break repair via homologous recombination"/>
    <property type="evidence" value="ECO:0007669"/>
    <property type="project" value="UniProtKB-UniRule"/>
</dbReference>
<dbReference type="Gene3D" id="6.10.140.1030">
    <property type="match status" value="1"/>
</dbReference>
<dbReference type="Gene3D" id="3.40.50.300">
    <property type="entry name" value="P-loop containing nucleotide triphosphate hydrolases"/>
    <property type="match status" value="3"/>
</dbReference>
<dbReference type="HAMAP" id="MF_01452">
    <property type="entry name" value="AddB_type1"/>
    <property type="match status" value="1"/>
</dbReference>
<dbReference type="InterPro" id="IPR049035">
    <property type="entry name" value="ADDB_N"/>
</dbReference>
<dbReference type="InterPro" id="IPR014140">
    <property type="entry name" value="DNA_helicase_suAddB"/>
</dbReference>
<dbReference type="InterPro" id="IPR014017">
    <property type="entry name" value="DNA_helicase_UvrD-like_C"/>
</dbReference>
<dbReference type="InterPro" id="IPR027417">
    <property type="entry name" value="P-loop_NTPase"/>
</dbReference>
<dbReference type="InterPro" id="IPR038726">
    <property type="entry name" value="PDDEXK_AddAB-type"/>
</dbReference>
<dbReference type="NCBIfam" id="TIGR02773">
    <property type="entry name" value="addB_Gpos"/>
    <property type="match status" value="1"/>
</dbReference>
<dbReference type="PANTHER" id="PTHR30591">
    <property type="entry name" value="RECBCD ENZYME SUBUNIT RECC"/>
    <property type="match status" value="1"/>
</dbReference>
<dbReference type="PANTHER" id="PTHR30591:SF1">
    <property type="entry name" value="RECBCD ENZYME SUBUNIT RECC"/>
    <property type="match status" value="1"/>
</dbReference>
<dbReference type="Pfam" id="PF21445">
    <property type="entry name" value="ADDB_N"/>
    <property type="match status" value="1"/>
</dbReference>
<dbReference type="Pfam" id="PF12705">
    <property type="entry name" value="PDDEXK_1"/>
    <property type="match status" value="1"/>
</dbReference>
<dbReference type="SUPFAM" id="SSF52540">
    <property type="entry name" value="P-loop containing nucleoside triphosphate hydrolases"/>
    <property type="match status" value="1"/>
</dbReference>
<dbReference type="PROSITE" id="PS51198">
    <property type="entry name" value="UVRD_HELICASE_ATP_BIND"/>
    <property type="match status" value="1"/>
</dbReference>
<dbReference type="PROSITE" id="PS51217">
    <property type="entry name" value="UVRD_HELICASE_CTER"/>
    <property type="match status" value="1"/>
</dbReference>
<accession>B1I494</accession>
<name>ADDB_DESAP</name>
<comment type="function">
    <text evidence="1">The heterodimer acts as both an ATP-dependent DNA helicase and an ATP-dependent, dual-direction single-stranded exonuclease. Recognizes the chi site generating a DNA molecule suitable for the initiation of homologous recombination. The AddB subunit has 5' -&gt; 3' nuclease activity but not helicase activity.</text>
</comment>
<comment type="cofactor">
    <cofactor evidence="1">
        <name>Mg(2+)</name>
        <dbReference type="ChEBI" id="CHEBI:18420"/>
    </cofactor>
</comment>
<comment type="cofactor">
    <cofactor evidence="1">
        <name>[4Fe-4S] cluster</name>
        <dbReference type="ChEBI" id="CHEBI:49883"/>
    </cofactor>
    <text evidence="1">Binds 1 [4Fe-4S] cluster.</text>
</comment>
<comment type="subunit">
    <text evidence="1">Heterodimer of AddA and AddB.</text>
</comment>
<comment type="miscellaneous">
    <text evidence="1">Despite having conserved helicase domains, this subunit does not have helicase activity.</text>
</comment>
<comment type="similarity">
    <text evidence="1">Belongs to the helicase family. AddB/RexB type 1 subfamily.</text>
</comment>
<proteinExistence type="inferred from homology"/>
<organism>
    <name type="scientific">Desulforudis audaxviator (strain MP104C)</name>
    <dbReference type="NCBI Taxonomy" id="477974"/>
    <lineage>
        <taxon>Bacteria</taxon>
        <taxon>Bacillati</taxon>
        <taxon>Bacillota</taxon>
        <taxon>Clostridia</taxon>
        <taxon>Thermoanaerobacterales</taxon>
        <taxon>Candidatus Desulforudaceae</taxon>
        <taxon>Candidatus Desulforudis</taxon>
    </lineage>
</organism>